<protein>
    <recommendedName>
        <fullName evidence="1">Peptide methionine sulfoxide reductase MsrA</fullName>
        <shortName evidence="1">Protein-methionine-S-oxide reductase</shortName>
        <ecNumber evidence="1">1.8.4.11</ecNumber>
    </recommendedName>
    <alternativeName>
        <fullName evidence="1">Peptide-methionine (S)-S-oxide reductase</fullName>
        <shortName evidence="1">Peptide Met(O) reductase</shortName>
    </alternativeName>
</protein>
<keyword id="KW-0560">Oxidoreductase</keyword>
<keyword id="KW-1185">Reference proteome</keyword>
<gene>
    <name evidence="1" type="primary">msrA</name>
    <name type="ordered locus">NIS_1118</name>
</gene>
<name>MSRA_NITSB</name>
<sequence length="174" mass="20042">MSESAIVGGGCFWCLEAIFQRVKGVHRVTSGYAGCRRQNPTYEQVCTGTTKCAEVVKIDFDPHIINYEELLHIFFAVHDPTQLNRQGADIGTQYRSVIFPLNEEQKAIAQKVIQKLNPYFENKIVTTIENPGTFYEAESYHQNYYNTHPDQGYCQVVIAPKLKKFMNMFQEYLQ</sequence>
<accession>A6Q418</accession>
<dbReference type="EC" id="1.8.4.11" evidence="1"/>
<dbReference type="EMBL" id="AP009178">
    <property type="protein sequence ID" value="BAF70227.1"/>
    <property type="molecule type" value="Genomic_DNA"/>
</dbReference>
<dbReference type="RefSeq" id="WP_012082490.1">
    <property type="nucleotide sequence ID" value="NC_009662.1"/>
</dbReference>
<dbReference type="SMR" id="A6Q418"/>
<dbReference type="FunCoup" id="A6Q418">
    <property type="interactions" value="395"/>
</dbReference>
<dbReference type="STRING" id="387092.NIS_1118"/>
<dbReference type="KEGG" id="nis:NIS_1118"/>
<dbReference type="eggNOG" id="COG0225">
    <property type="taxonomic scope" value="Bacteria"/>
</dbReference>
<dbReference type="HOGENOM" id="CLU_031040_10_0_7"/>
<dbReference type="InParanoid" id="A6Q418"/>
<dbReference type="OrthoDB" id="4174719at2"/>
<dbReference type="Proteomes" id="UP000001118">
    <property type="component" value="Chromosome"/>
</dbReference>
<dbReference type="GO" id="GO:0033744">
    <property type="term" value="F:L-methionine:thioredoxin-disulfide S-oxidoreductase activity"/>
    <property type="evidence" value="ECO:0007669"/>
    <property type="project" value="RHEA"/>
</dbReference>
<dbReference type="GO" id="GO:0008113">
    <property type="term" value="F:peptide-methionine (S)-S-oxide reductase activity"/>
    <property type="evidence" value="ECO:0007669"/>
    <property type="project" value="UniProtKB-UniRule"/>
</dbReference>
<dbReference type="GO" id="GO:0036211">
    <property type="term" value="P:protein modification process"/>
    <property type="evidence" value="ECO:0007669"/>
    <property type="project" value="UniProtKB-UniRule"/>
</dbReference>
<dbReference type="Gene3D" id="3.30.1060.10">
    <property type="entry name" value="Peptide methionine sulphoxide reductase MsrA"/>
    <property type="match status" value="1"/>
</dbReference>
<dbReference type="HAMAP" id="MF_01401">
    <property type="entry name" value="MsrA"/>
    <property type="match status" value="1"/>
</dbReference>
<dbReference type="InterPro" id="IPR002569">
    <property type="entry name" value="Met_Sox_Rdtase_MsrA_dom"/>
</dbReference>
<dbReference type="InterPro" id="IPR036509">
    <property type="entry name" value="Met_Sox_Rdtase_MsrA_sf"/>
</dbReference>
<dbReference type="NCBIfam" id="TIGR00401">
    <property type="entry name" value="msrA"/>
    <property type="match status" value="1"/>
</dbReference>
<dbReference type="PANTHER" id="PTHR43774">
    <property type="entry name" value="PEPTIDE METHIONINE SULFOXIDE REDUCTASE"/>
    <property type="match status" value="1"/>
</dbReference>
<dbReference type="PANTHER" id="PTHR43774:SF1">
    <property type="entry name" value="PEPTIDE METHIONINE SULFOXIDE REDUCTASE MSRA 2"/>
    <property type="match status" value="1"/>
</dbReference>
<dbReference type="Pfam" id="PF01625">
    <property type="entry name" value="PMSR"/>
    <property type="match status" value="1"/>
</dbReference>
<dbReference type="SUPFAM" id="SSF55068">
    <property type="entry name" value="Peptide methionine sulfoxide reductase"/>
    <property type="match status" value="1"/>
</dbReference>
<evidence type="ECO:0000255" key="1">
    <source>
        <dbReference type="HAMAP-Rule" id="MF_01401"/>
    </source>
</evidence>
<comment type="function">
    <text evidence="1">Has an important function as a repair enzyme for proteins that have been inactivated by oxidation. Catalyzes the reversible oxidation-reduction of methionine sulfoxide in proteins to methionine.</text>
</comment>
<comment type="catalytic activity">
    <reaction evidence="1">
        <text>L-methionyl-[protein] + [thioredoxin]-disulfide + H2O = L-methionyl-(S)-S-oxide-[protein] + [thioredoxin]-dithiol</text>
        <dbReference type="Rhea" id="RHEA:14217"/>
        <dbReference type="Rhea" id="RHEA-COMP:10698"/>
        <dbReference type="Rhea" id="RHEA-COMP:10700"/>
        <dbReference type="Rhea" id="RHEA-COMP:12313"/>
        <dbReference type="Rhea" id="RHEA-COMP:12315"/>
        <dbReference type="ChEBI" id="CHEBI:15377"/>
        <dbReference type="ChEBI" id="CHEBI:16044"/>
        <dbReference type="ChEBI" id="CHEBI:29950"/>
        <dbReference type="ChEBI" id="CHEBI:44120"/>
        <dbReference type="ChEBI" id="CHEBI:50058"/>
        <dbReference type="EC" id="1.8.4.11"/>
    </reaction>
</comment>
<comment type="catalytic activity">
    <reaction evidence="1">
        <text>[thioredoxin]-disulfide + L-methionine + H2O = L-methionine (S)-S-oxide + [thioredoxin]-dithiol</text>
        <dbReference type="Rhea" id="RHEA:19993"/>
        <dbReference type="Rhea" id="RHEA-COMP:10698"/>
        <dbReference type="Rhea" id="RHEA-COMP:10700"/>
        <dbReference type="ChEBI" id="CHEBI:15377"/>
        <dbReference type="ChEBI" id="CHEBI:29950"/>
        <dbReference type="ChEBI" id="CHEBI:50058"/>
        <dbReference type="ChEBI" id="CHEBI:57844"/>
        <dbReference type="ChEBI" id="CHEBI:58772"/>
        <dbReference type="EC" id="1.8.4.11"/>
    </reaction>
</comment>
<comment type="similarity">
    <text evidence="1">Belongs to the MsrA Met sulfoxide reductase family.</text>
</comment>
<organism>
    <name type="scientific">Nitratiruptor sp. (strain SB155-2)</name>
    <dbReference type="NCBI Taxonomy" id="387092"/>
    <lineage>
        <taxon>Bacteria</taxon>
        <taxon>Pseudomonadati</taxon>
        <taxon>Campylobacterota</taxon>
        <taxon>Epsilonproteobacteria</taxon>
        <taxon>Nautiliales</taxon>
        <taxon>Nitratiruptoraceae</taxon>
        <taxon>Nitratiruptor</taxon>
    </lineage>
</organism>
<feature type="chain" id="PRO_1000073500" description="Peptide methionine sulfoxide reductase MsrA">
    <location>
        <begin position="1"/>
        <end position="174"/>
    </location>
</feature>
<feature type="active site" evidence="1">
    <location>
        <position position="11"/>
    </location>
</feature>
<reference key="1">
    <citation type="journal article" date="2007" name="Proc. Natl. Acad. Sci. U.S.A.">
        <title>Deep-sea vent epsilon-proteobacterial genomes provide insights into emergence of pathogens.</title>
        <authorList>
            <person name="Nakagawa S."/>
            <person name="Takaki Y."/>
            <person name="Shimamura S."/>
            <person name="Reysenbach A.-L."/>
            <person name="Takai K."/>
            <person name="Horikoshi K."/>
        </authorList>
    </citation>
    <scope>NUCLEOTIDE SEQUENCE [LARGE SCALE GENOMIC DNA]</scope>
    <source>
        <strain>SB155-2</strain>
    </source>
</reference>
<proteinExistence type="inferred from homology"/>